<name>UVRA_STRMU</name>
<organism>
    <name type="scientific">Streptococcus mutans serotype c (strain ATCC 700610 / UA159)</name>
    <dbReference type="NCBI Taxonomy" id="210007"/>
    <lineage>
        <taxon>Bacteria</taxon>
        <taxon>Bacillati</taxon>
        <taxon>Bacillota</taxon>
        <taxon>Bacilli</taxon>
        <taxon>Lactobacillales</taxon>
        <taxon>Streptococcaceae</taxon>
        <taxon>Streptococcus</taxon>
    </lineage>
</organism>
<accession>P72481</accession>
<gene>
    <name evidence="1" type="primary">uvrA</name>
    <name type="ordered locus">SMU_1851</name>
</gene>
<proteinExistence type="inferred from homology"/>
<sequence>MQDKLIIRGARAHNLKNIDVEIPRDKLIVMTGLSGSGKSSLAFDTIYAEGQRRYVESLSAYARQFLGNMDKPDVDSIDGLSPAISIDQKTTSKNPRSTVGTVTEINDYLRLLYARVGIPYCKNGHGAITASSVEQIVDQVLILPERTRMQILAPVVRRKKGQHKAVFDRIQKDGYVRVRIDGDIMDVAEVPELSKNKMHNIEVVVDRLVQKDGIRGRLFDSIEAALHLGDGYVIIDTMDDHELIFSEHYSCPVCGFTVPELEPRLFSFNAPFGSCPTCDGLGIKLEVDLDLVIPDENKTLREGTLAPWNPISSNYYPQLLEQAMNAFGVDMDKPWKDLSDEDKKLVLHGSGDTAFHFHYQNDFGGVRDIDIPFEGIISNISRRYHETNSDFTRNVMRSYMNELPCATCHGYRLNDQALSVRVGGKEGLNIGQVSELSIADHLSLLTHLELSENEKTIATPIVKEIKDRLTFLNNVGLNYLTLSRSAGTLSGGESQRIRLATQIGSNLSGVLYILDEPSIGLHQRDNDRLISSLKKMRDLGNTLIVVEHDEDTMMAADWLVDVGPGAGALGGEIVASGTPRQVAKNKKSITGQYLSGKKKIPVPLDRRKGSGRFIEIKGAAENNLQNINVKFPLGKFIAVTGVSGSGKSTLVNSILKKVIAQKLNRNSEKPGKYKSISGIEHIDRLIDIDQSPIGRTPRSNPATYTGVFDDIRDLFAQTNEAKIRGYKKGRFSFNVKGGRCEACSGDGIIKIEMHFLPDVYVPCEVCHGTRYNSETLEVHYKDKNIAEILNMTVNDAAEFFAPIPKIARKIRTIKDVGLGYVTLGQPATTLSGGEAQRMKLASELHKRSTGKSFYILDEPTTGLHTDDIARLLKVLERFVDDGNTVLVIEHNLDVIKTADHIIDLGPEGGVGGGQVIATGTPEQVAEMTESYTGQYLKGRLNEK</sequence>
<keyword id="KW-0067">ATP-binding</keyword>
<keyword id="KW-0963">Cytoplasm</keyword>
<keyword id="KW-0227">DNA damage</keyword>
<keyword id="KW-0228">DNA excision</keyword>
<keyword id="KW-0234">DNA repair</keyword>
<keyword id="KW-0238">DNA-binding</keyword>
<keyword id="KW-0267">Excision nuclease</keyword>
<keyword id="KW-0479">Metal-binding</keyword>
<keyword id="KW-0547">Nucleotide-binding</keyword>
<keyword id="KW-1185">Reference proteome</keyword>
<keyword id="KW-0677">Repeat</keyword>
<keyword id="KW-0742">SOS response</keyword>
<keyword id="KW-0862">Zinc</keyword>
<keyword id="KW-0863">Zinc-finger</keyword>
<feature type="chain" id="PRO_0000093099" description="UvrABC system protein A">
    <location>
        <begin position="1"/>
        <end position="943"/>
    </location>
</feature>
<feature type="domain" description="ABC transporter 1" evidence="1">
    <location>
        <begin position="308"/>
        <end position="589"/>
    </location>
</feature>
<feature type="domain" description="ABC transporter 2" evidence="1">
    <location>
        <begin position="609"/>
        <end position="937"/>
    </location>
</feature>
<feature type="zinc finger region" description="C4-type" evidence="1">
    <location>
        <begin position="251"/>
        <end position="278"/>
    </location>
</feature>
<feature type="zinc finger region" description="C4-type" evidence="1">
    <location>
        <begin position="740"/>
        <end position="766"/>
    </location>
</feature>
<feature type="binding site" evidence="1">
    <location>
        <begin position="32"/>
        <end position="39"/>
    </location>
    <ligand>
        <name>ATP</name>
        <dbReference type="ChEBI" id="CHEBI:30616"/>
    </ligand>
</feature>
<feature type="binding site" evidence="1">
    <location>
        <begin position="641"/>
        <end position="648"/>
    </location>
    <ligand>
        <name>ATP</name>
        <dbReference type="ChEBI" id="CHEBI:30616"/>
    </ligand>
</feature>
<evidence type="ECO:0000255" key="1">
    <source>
        <dbReference type="HAMAP-Rule" id="MF_00205"/>
    </source>
</evidence>
<comment type="function">
    <text evidence="1">The UvrABC repair system catalyzes the recognition and processing of DNA lesions. UvrA is an ATPase and a DNA-binding protein. A damage recognition complex composed of 2 UvrA and 2 UvrB subunits scans DNA for abnormalities. When the presence of a lesion has been verified by UvrB, the UvrA molecules dissociate.</text>
</comment>
<comment type="subunit">
    <text evidence="1">Forms a heterotetramer with UvrB during the search for lesions.</text>
</comment>
<comment type="subcellular location">
    <subcellularLocation>
        <location evidence="1">Cytoplasm</location>
    </subcellularLocation>
</comment>
<comment type="similarity">
    <text evidence="1">Belongs to the ABC transporter superfamily. UvrA family.</text>
</comment>
<protein>
    <recommendedName>
        <fullName evidence="1">UvrABC system protein A</fullName>
        <shortName evidence="1">UvrA protein</shortName>
    </recommendedName>
    <alternativeName>
        <fullName evidence="1">Excinuclease ABC subunit A</fullName>
    </alternativeName>
</protein>
<reference key="1">
    <citation type="journal article" date="2002" name="Proc. Natl. Acad. Sci. U.S.A.">
        <title>Genome sequence of Streptococcus mutans UA159, a cariogenic dental pathogen.</title>
        <authorList>
            <person name="Ajdic D.J."/>
            <person name="McShan W.M."/>
            <person name="McLaughlin R.E."/>
            <person name="Savic G."/>
            <person name="Chang J."/>
            <person name="Carson M.B."/>
            <person name="Primeaux C."/>
            <person name="Tian R."/>
            <person name="Kenton S."/>
            <person name="Jia H.G."/>
            <person name="Lin S.P."/>
            <person name="Qian Y."/>
            <person name="Li S."/>
            <person name="Zhu H."/>
            <person name="Najar F.Z."/>
            <person name="Lai H."/>
            <person name="White J."/>
            <person name="Roe B.A."/>
            <person name="Ferretti J.J."/>
        </authorList>
    </citation>
    <scope>NUCLEOTIDE SEQUENCE [LARGE SCALE GENOMIC DNA]</scope>
    <source>
        <strain>ATCC 700610 / UA159</strain>
    </source>
</reference>
<reference key="2">
    <citation type="submission" date="1996-10" db="EMBL/GenBank/DDBJ databases">
        <authorList>
            <person name="Peruzzi F."/>
            <person name="Piggot P.J."/>
            <person name="Daneo-Moore L."/>
        </authorList>
    </citation>
    <scope>NUCLEOTIDE SEQUENCE [GENOMIC DNA] OF 469-604</scope>
    <source>
        <strain>GS-5</strain>
    </source>
</reference>
<dbReference type="EMBL" id="AE014133">
    <property type="protein sequence ID" value="AAN59473.1"/>
    <property type="molecule type" value="Genomic_DNA"/>
</dbReference>
<dbReference type="EMBL" id="U75479">
    <property type="protein sequence ID" value="AAB41197.1"/>
    <property type="molecule type" value="Genomic_DNA"/>
</dbReference>
<dbReference type="RefSeq" id="NP_722167.1">
    <property type="nucleotide sequence ID" value="NC_004350.2"/>
</dbReference>
<dbReference type="RefSeq" id="WP_002262666.1">
    <property type="nucleotide sequence ID" value="NC_004350.2"/>
</dbReference>
<dbReference type="SMR" id="P72481"/>
<dbReference type="STRING" id="210007.SMU_1851"/>
<dbReference type="KEGG" id="smu:SMU_1851"/>
<dbReference type="PATRIC" id="fig|210007.7.peg.1653"/>
<dbReference type="eggNOG" id="COG0178">
    <property type="taxonomic scope" value="Bacteria"/>
</dbReference>
<dbReference type="HOGENOM" id="CLU_001370_0_2_9"/>
<dbReference type="OrthoDB" id="9809851at2"/>
<dbReference type="PhylomeDB" id="P72481"/>
<dbReference type="Proteomes" id="UP000002512">
    <property type="component" value="Chromosome"/>
</dbReference>
<dbReference type="GO" id="GO:0005737">
    <property type="term" value="C:cytoplasm"/>
    <property type="evidence" value="ECO:0007669"/>
    <property type="project" value="UniProtKB-SubCell"/>
</dbReference>
<dbReference type="GO" id="GO:0009380">
    <property type="term" value="C:excinuclease repair complex"/>
    <property type="evidence" value="ECO:0007669"/>
    <property type="project" value="InterPro"/>
</dbReference>
<dbReference type="GO" id="GO:0005524">
    <property type="term" value="F:ATP binding"/>
    <property type="evidence" value="ECO:0007669"/>
    <property type="project" value="UniProtKB-UniRule"/>
</dbReference>
<dbReference type="GO" id="GO:0016887">
    <property type="term" value="F:ATP hydrolysis activity"/>
    <property type="evidence" value="ECO:0007669"/>
    <property type="project" value="InterPro"/>
</dbReference>
<dbReference type="GO" id="GO:0003677">
    <property type="term" value="F:DNA binding"/>
    <property type="evidence" value="ECO:0007669"/>
    <property type="project" value="UniProtKB-UniRule"/>
</dbReference>
<dbReference type="GO" id="GO:0009381">
    <property type="term" value="F:excinuclease ABC activity"/>
    <property type="evidence" value="ECO:0007669"/>
    <property type="project" value="UniProtKB-UniRule"/>
</dbReference>
<dbReference type="GO" id="GO:0008270">
    <property type="term" value="F:zinc ion binding"/>
    <property type="evidence" value="ECO:0007669"/>
    <property type="project" value="UniProtKB-UniRule"/>
</dbReference>
<dbReference type="GO" id="GO:0006289">
    <property type="term" value="P:nucleotide-excision repair"/>
    <property type="evidence" value="ECO:0007669"/>
    <property type="project" value="UniProtKB-UniRule"/>
</dbReference>
<dbReference type="GO" id="GO:0009432">
    <property type="term" value="P:SOS response"/>
    <property type="evidence" value="ECO:0007669"/>
    <property type="project" value="UniProtKB-UniRule"/>
</dbReference>
<dbReference type="CDD" id="cd03270">
    <property type="entry name" value="ABC_UvrA_I"/>
    <property type="match status" value="1"/>
</dbReference>
<dbReference type="CDD" id="cd03271">
    <property type="entry name" value="ABC_UvrA_II"/>
    <property type="match status" value="1"/>
</dbReference>
<dbReference type="FunFam" id="1.20.1580.10:FF:000002">
    <property type="entry name" value="UvrABC system protein A"/>
    <property type="match status" value="1"/>
</dbReference>
<dbReference type="FunFam" id="3.40.50.300:FF:000028">
    <property type="entry name" value="UvrABC system protein A"/>
    <property type="match status" value="1"/>
</dbReference>
<dbReference type="Gene3D" id="1.10.8.280">
    <property type="entry name" value="ABC transporter ATPase domain-like"/>
    <property type="match status" value="1"/>
</dbReference>
<dbReference type="Gene3D" id="1.20.1580.10">
    <property type="entry name" value="ABC transporter ATPase like domain"/>
    <property type="match status" value="2"/>
</dbReference>
<dbReference type="Gene3D" id="3.30.1490.20">
    <property type="entry name" value="ATP-grasp fold, A domain"/>
    <property type="match status" value="1"/>
</dbReference>
<dbReference type="Gene3D" id="3.40.50.300">
    <property type="entry name" value="P-loop containing nucleotide triphosphate hydrolases"/>
    <property type="match status" value="2"/>
</dbReference>
<dbReference type="HAMAP" id="MF_00205">
    <property type="entry name" value="UvrA"/>
    <property type="match status" value="1"/>
</dbReference>
<dbReference type="InterPro" id="IPR003593">
    <property type="entry name" value="AAA+_ATPase"/>
</dbReference>
<dbReference type="InterPro" id="IPR003439">
    <property type="entry name" value="ABC_transporter-like_ATP-bd"/>
</dbReference>
<dbReference type="InterPro" id="IPR017871">
    <property type="entry name" value="ABC_transporter-like_CS"/>
</dbReference>
<dbReference type="InterPro" id="IPR013815">
    <property type="entry name" value="ATP_grasp_subdomain_1"/>
</dbReference>
<dbReference type="InterPro" id="IPR027417">
    <property type="entry name" value="P-loop_NTPase"/>
</dbReference>
<dbReference type="InterPro" id="IPR004602">
    <property type="entry name" value="UvrA"/>
</dbReference>
<dbReference type="InterPro" id="IPR041552">
    <property type="entry name" value="UvrA_DNA-bd"/>
</dbReference>
<dbReference type="InterPro" id="IPR041102">
    <property type="entry name" value="UvrA_inter"/>
</dbReference>
<dbReference type="NCBIfam" id="NF001503">
    <property type="entry name" value="PRK00349.1"/>
    <property type="match status" value="1"/>
</dbReference>
<dbReference type="NCBIfam" id="TIGR00630">
    <property type="entry name" value="uvra"/>
    <property type="match status" value="1"/>
</dbReference>
<dbReference type="PANTHER" id="PTHR43152">
    <property type="entry name" value="UVRABC SYSTEM PROTEIN A"/>
    <property type="match status" value="1"/>
</dbReference>
<dbReference type="PANTHER" id="PTHR43152:SF3">
    <property type="entry name" value="UVRABC SYSTEM PROTEIN A"/>
    <property type="match status" value="1"/>
</dbReference>
<dbReference type="Pfam" id="PF00005">
    <property type="entry name" value="ABC_tran"/>
    <property type="match status" value="1"/>
</dbReference>
<dbReference type="Pfam" id="PF17755">
    <property type="entry name" value="UvrA_DNA-bind"/>
    <property type="match status" value="1"/>
</dbReference>
<dbReference type="Pfam" id="PF17760">
    <property type="entry name" value="UvrA_inter"/>
    <property type="match status" value="1"/>
</dbReference>
<dbReference type="SMART" id="SM00382">
    <property type="entry name" value="AAA"/>
    <property type="match status" value="2"/>
</dbReference>
<dbReference type="SUPFAM" id="SSF52540">
    <property type="entry name" value="P-loop containing nucleoside triphosphate hydrolases"/>
    <property type="match status" value="2"/>
</dbReference>
<dbReference type="PROSITE" id="PS00211">
    <property type="entry name" value="ABC_TRANSPORTER_1"/>
    <property type="match status" value="2"/>
</dbReference>
<dbReference type="PROSITE" id="PS50893">
    <property type="entry name" value="ABC_TRANSPORTER_2"/>
    <property type="match status" value="1"/>
</dbReference>